<name>CARB_CLOPE</name>
<organism>
    <name type="scientific">Clostridium perfringens (strain 13 / Type A)</name>
    <dbReference type="NCBI Taxonomy" id="195102"/>
    <lineage>
        <taxon>Bacteria</taxon>
        <taxon>Bacillati</taxon>
        <taxon>Bacillota</taxon>
        <taxon>Clostridia</taxon>
        <taxon>Eubacteriales</taxon>
        <taxon>Clostridiaceae</taxon>
        <taxon>Clostridium</taxon>
    </lineage>
</organism>
<protein>
    <recommendedName>
        <fullName evidence="1">Carbamoyl phosphate synthase large chain</fullName>
        <ecNumber evidence="1">6.3.4.16</ecNumber>
        <ecNumber evidence="1">6.3.5.5</ecNumber>
    </recommendedName>
    <alternativeName>
        <fullName evidence="1">Carbamoyl phosphate synthetase ammonia chain</fullName>
    </alternativeName>
</protein>
<accession>Q8XHB3</accession>
<keyword id="KW-0028">Amino-acid biosynthesis</keyword>
<keyword id="KW-0055">Arginine biosynthesis</keyword>
<keyword id="KW-0067">ATP-binding</keyword>
<keyword id="KW-0436">Ligase</keyword>
<keyword id="KW-0460">Magnesium</keyword>
<keyword id="KW-0464">Manganese</keyword>
<keyword id="KW-0479">Metal-binding</keyword>
<keyword id="KW-0547">Nucleotide-binding</keyword>
<keyword id="KW-0665">Pyrimidine biosynthesis</keyword>
<keyword id="KW-1185">Reference proteome</keyword>
<keyword id="KW-0677">Repeat</keyword>
<gene>
    <name evidence="1" type="primary">carB</name>
    <name type="ordered locus">CPE2572</name>
</gene>
<evidence type="ECO:0000255" key="1">
    <source>
        <dbReference type="HAMAP-Rule" id="MF_01210"/>
    </source>
</evidence>
<feature type="chain" id="PRO_0000145002" description="Carbamoyl phosphate synthase large chain">
    <location>
        <begin position="1"/>
        <end position="1067"/>
    </location>
</feature>
<feature type="domain" description="ATP-grasp 1" evidence="1">
    <location>
        <begin position="133"/>
        <end position="327"/>
    </location>
</feature>
<feature type="domain" description="ATP-grasp 2" evidence="1">
    <location>
        <begin position="674"/>
        <end position="864"/>
    </location>
</feature>
<feature type="domain" description="MGS-like" evidence="1">
    <location>
        <begin position="933"/>
        <end position="1067"/>
    </location>
</feature>
<feature type="region of interest" description="Carboxyphosphate synthetic domain" evidence="1">
    <location>
        <begin position="1"/>
        <end position="401"/>
    </location>
</feature>
<feature type="region of interest" description="Oligomerization domain" evidence="1">
    <location>
        <begin position="402"/>
        <end position="549"/>
    </location>
</feature>
<feature type="region of interest" description="Carbamoyl phosphate synthetic domain" evidence="1">
    <location>
        <begin position="550"/>
        <end position="932"/>
    </location>
</feature>
<feature type="region of interest" description="Allosteric domain" evidence="1">
    <location>
        <begin position="933"/>
        <end position="1067"/>
    </location>
</feature>
<feature type="binding site" evidence="1">
    <location>
        <position position="129"/>
    </location>
    <ligand>
        <name>ATP</name>
        <dbReference type="ChEBI" id="CHEBI:30616"/>
        <label>1</label>
    </ligand>
</feature>
<feature type="binding site" evidence="1">
    <location>
        <position position="169"/>
    </location>
    <ligand>
        <name>ATP</name>
        <dbReference type="ChEBI" id="CHEBI:30616"/>
        <label>1</label>
    </ligand>
</feature>
<feature type="binding site" evidence="1">
    <location>
        <position position="175"/>
    </location>
    <ligand>
        <name>ATP</name>
        <dbReference type="ChEBI" id="CHEBI:30616"/>
        <label>1</label>
    </ligand>
</feature>
<feature type="binding site" evidence="1">
    <location>
        <position position="176"/>
    </location>
    <ligand>
        <name>ATP</name>
        <dbReference type="ChEBI" id="CHEBI:30616"/>
        <label>1</label>
    </ligand>
</feature>
<feature type="binding site" evidence="1">
    <location>
        <position position="208"/>
    </location>
    <ligand>
        <name>ATP</name>
        <dbReference type="ChEBI" id="CHEBI:30616"/>
        <label>1</label>
    </ligand>
</feature>
<feature type="binding site" evidence="1">
    <location>
        <position position="210"/>
    </location>
    <ligand>
        <name>ATP</name>
        <dbReference type="ChEBI" id="CHEBI:30616"/>
        <label>1</label>
    </ligand>
</feature>
<feature type="binding site" evidence="1">
    <location>
        <position position="215"/>
    </location>
    <ligand>
        <name>ATP</name>
        <dbReference type="ChEBI" id="CHEBI:30616"/>
        <label>1</label>
    </ligand>
</feature>
<feature type="binding site" evidence="1">
    <location>
        <position position="241"/>
    </location>
    <ligand>
        <name>ATP</name>
        <dbReference type="ChEBI" id="CHEBI:30616"/>
        <label>1</label>
    </ligand>
</feature>
<feature type="binding site" evidence="1">
    <location>
        <position position="242"/>
    </location>
    <ligand>
        <name>ATP</name>
        <dbReference type="ChEBI" id="CHEBI:30616"/>
        <label>1</label>
    </ligand>
</feature>
<feature type="binding site" evidence="1">
    <location>
        <position position="243"/>
    </location>
    <ligand>
        <name>ATP</name>
        <dbReference type="ChEBI" id="CHEBI:30616"/>
        <label>1</label>
    </ligand>
</feature>
<feature type="binding site" evidence="1">
    <location>
        <position position="284"/>
    </location>
    <ligand>
        <name>ATP</name>
        <dbReference type="ChEBI" id="CHEBI:30616"/>
        <label>1</label>
    </ligand>
</feature>
<feature type="binding site" evidence="1">
    <location>
        <position position="284"/>
    </location>
    <ligand>
        <name>Mg(2+)</name>
        <dbReference type="ChEBI" id="CHEBI:18420"/>
        <label>1</label>
    </ligand>
</feature>
<feature type="binding site" evidence="1">
    <location>
        <position position="284"/>
    </location>
    <ligand>
        <name>Mn(2+)</name>
        <dbReference type="ChEBI" id="CHEBI:29035"/>
        <label>1</label>
    </ligand>
</feature>
<feature type="binding site" evidence="1">
    <location>
        <position position="298"/>
    </location>
    <ligand>
        <name>ATP</name>
        <dbReference type="ChEBI" id="CHEBI:30616"/>
        <label>1</label>
    </ligand>
</feature>
<feature type="binding site" evidence="1">
    <location>
        <position position="298"/>
    </location>
    <ligand>
        <name>Mg(2+)</name>
        <dbReference type="ChEBI" id="CHEBI:18420"/>
        <label>1</label>
    </ligand>
</feature>
<feature type="binding site" evidence="1">
    <location>
        <position position="298"/>
    </location>
    <ligand>
        <name>Mg(2+)</name>
        <dbReference type="ChEBI" id="CHEBI:18420"/>
        <label>2</label>
    </ligand>
</feature>
<feature type="binding site" evidence="1">
    <location>
        <position position="298"/>
    </location>
    <ligand>
        <name>Mn(2+)</name>
        <dbReference type="ChEBI" id="CHEBI:29035"/>
        <label>1</label>
    </ligand>
</feature>
<feature type="binding site" evidence="1">
    <location>
        <position position="298"/>
    </location>
    <ligand>
        <name>Mn(2+)</name>
        <dbReference type="ChEBI" id="CHEBI:29035"/>
        <label>2</label>
    </ligand>
</feature>
<feature type="binding site" evidence="1">
    <location>
        <position position="300"/>
    </location>
    <ligand>
        <name>Mg(2+)</name>
        <dbReference type="ChEBI" id="CHEBI:18420"/>
        <label>2</label>
    </ligand>
</feature>
<feature type="binding site" evidence="1">
    <location>
        <position position="300"/>
    </location>
    <ligand>
        <name>Mn(2+)</name>
        <dbReference type="ChEBI" id="CHEBI:29035"/>
        <label>2</label>
    </ligand>
</feature>
<feature type="binding site" evidence="1">
    <location>
        <position position="710"/>
    </location>
    <ligand>
        <name>ATP</name>
        <dbReference type="ChEBI" id="CHEBI:30616"/>
        <label>2</label>
    </ligand>
</feature>
<feature type="binding site" evidence="1">
    <location>
        <position position="749"/>
    </location>
    <ligand>
        <name>ATP</name>
        <dbReference type="ChEBI" id="CHEBI:30616"/>
        <label>2</label>
    </ligand>
</feature>
<feature type="binding site" evidence="1">
    <location>
        <position position="751"/>
    </location>
    <ligand>
        <name>ATP</name>
        <dbReference type="ChEBI" id="CHEBI:30616"/>
        <label>2</label>
    </ligand>
</feature>
<feature type="binding site" evidence="1">
    <location>
        <position position="755"/>
    </location>
    <ligand>
        <name>ATP</name>
        <dbReference type="ChEBI" id="CHEBI:30616"/>
        <label>2</label>
    </ligand>
</feature>
<feature type="binding site" evidence="1">
    <location>
        <position position="780"/>
    </location>
    <ligand>
        <name>ATP</name>
        <dbReference type="ChEBI" id="CHEBI:30616"/>
        <label>2</label>
    </ligand>
</feature>
<feature type="binding site" evidence="1">
    <location>
        <position position="781"/>
    </location>
    <ligand>
        <name>ATP</name>
        <dbReference type="ChEBI" id="CHEBI:30616"/>
        <label>2</label>
    </ligand>
</feature>
<feature type="binding site" evidence="1">
    <location>
        <position position="782"/>
    </location>
    <ligand>
        <name>ATP</name>
        <dbReference type="ChEBI" id="CHEBI:30616"/>
        <label>2</label>
    </ligand>
</feature>
<feature type="binding site" evidence="1">
    <location>
        <position position="783"/>
    </location>
    <ligand>
        <name>ATP</name>
        <dbReference type="ChEBI" id="CHEBI:30616"/>
        <label>2</label>
    </ligand>
</feature>
<feature type="binding site" evidence="1">
    <location>
        <position position="823"/>
    </location>
    <ligand>
        <name>ATP</name>
        <dbReference type="ChEBI" id="CHEBI:30616"/>
        <label>2</label>
    </ligand>
</feature>
<feature type="binding site" evidence="1">
    <location>
        <position position="823"/>
    </location>
    <ligand>
        <name>Mg(2+)</name>
        <dbReference type="ChEBI" id="CHEBI:18420"/>
        <label>3</label>
    </ligand>
</feature>
<feature type="binding site" evidence="1">
    <location>
        <position position="823"/>
    </location>
    <ligand>
        <name>Mn(2+)</name>
        <dbReference type="ChEBI" id="CHEBI:29035"/>
        <label>3</label>
    </ligand>
</feature>
<feature type="binding site" evidence="1">
    <location>
        <position position="835"/>
    </location>
    <ligand>
        <name>ATP</name>
        <dbReference type="ChEBI" id="CHEBI:30616"/>
        <label>2</label>
    </ligand>
</feature>
<feature type="binding site" evidence="1">
    <location>
        <position position="835"/>
    </location>
    <ligand>
        <name>Mg(2+)</name>
        <dbReference type="ChEBI" id="CHEBI:18420"/>
        <label>3</label>
    </ligand>
</feature>
<feature type="binding site" evidence="1">
    <location>
        <position position="835"/>
    </location>
    <ligand>
        <name>Mg(2+)</name>
        <dbReference type="ChEBI" id="CHEBI:18420"/>
        <label>4</label>
    </ligand>
</feature>
<feature type="binding site" evidence="1">
    <location>
        <position position="835"/>
    </location>
    <ligand>
        <name>Mn(2+)</name>
        <dbReference type="ChEBI" id="CHEBI:29035"/>
        <label>3</label>
    </ligand>
</feature>
<feature type="binding site" evidence="1">
    <location>
        <position position="835"/>
    </location>
    <ligand>
        <name>Mn(2+)</name>
        <dbReference type="ChEBI" id="CHEBI:29035"/>
        <label>4</label>
    </ligand>
</feature>
<feature type="binding site" evidence="1">
    <location>
        <position position="837"/>
    </location>
    <ligand>
        <name>Mg(2+)</name>
        <dbReference type="ChEBI" id="CHEBI:18420"/>
        <label>4</label>
    </ligand>
</feature>
<feature type="binding site" evidence="1">
    <location>
        <position position="837"/>
    </location>
    <ligand>
        <name>Mn(2+)</name>
        <dbReference type="ChEBI" id="CHEBI:29035"/>
        <label>4</label>
    </ligand>
</feature>
<sequence>MPLNKDIKKVLVIGSGPIIIGQAAEFDYSGTQACQALKEEGIEVVLVNSNPATIMTDKEIADKVYLEPLTVEFVEKVIEKERPDSLLAGMGGQTGLNLAVELYEKGILDKYNVKVIGTSIESIKEGEDRELFRDMMNRINQPVIQSEIITDLDAGIAFARKIGYPVIVRPAYTLGGTGGGIANNEEELIETLTSGLQLSTIGQVLLEKSVKGWKEIEYEVMRDSFGNCITVCNMENIDPVGIHTGDSIVVAPSQTLSDKEYQMLRSASIDIINAVGIEGGCNVQFALNPHSFEYAVIEINPRVSRSSALASKATGYPIAKVAAKIALGYGLDEIKNAVTGMTYACFEPSLDYVVVKIPKWPFDKFQGADRVLGTKMMATGEIMAIGSNFEAAFLKGIRSLEIGKYSLEHKKFKDLSMYELRERVVSPDDERIFALAEMLRRGYRIDMVSKITGIDIFFLEKFRWLVEEEQKLKQSTIDDLNREWLLKLKRRGFSDKAIADMLKVSPDEIYRLRDIWHIKPSYKMVDTCGGEFEALSPYYYSTYEQYDEVVVSDNKKVVVIGSGPIRIGQGIEFDYASVHCVMALRKQGIETIVINNNPETVSTDFSISDKLYFEPLTEEDVLNIIDKEKPDGVILQFGGQTAIKLAKFLKEKNIPTLGTTSDQIDLAEDREQFDDLLERLNIARPKGKGVWSLEEGLEEARRLGFPILVRPSFVLGGQGMEITHDEEELTYYLTNAFEKDSKNPILIDKYLMGREIEVDAISDGEDVLVPGIMEHLERAGVHSGDSITMYPAQNISDKIKEDVLDYTKKLALSIGIKGMINIQFIEFEGKLYVIEVNPRASRTVPYISKVSGVPIVDIATRIMLGEKLKDLGYGTGVYKEPELVSVKVPVFSTQKLPNVEVSLGPEMRSTGEVLGVGRNVFEALYKGFVGASMYTGDKGKTILATIKKHDKKEFMELAKDLDKLGYNFIATTGTAKELREAGIDAKEVRRIGEESPNIMDLIKNKEIDLVVNTPTKANDSKRDGFHIRRAAIERNIGVMTSLDTLKALVELQKEGAHNRELEVFNLI</sequence>
<reference key="1">
    <citation type="journal article" date="2002" name="Proc. Natl. Acad. Sci. U.S.A.">
        <title>Complete genome sequence of Clostridium perfringens, an anaerobic flesh-eater.</title>
        <authorList>
            <person name="Shimizu T."/>
            <person name="Ohtani K."/>
            <person name="Hirakawa H."/>
            <person name="Ohshima K."/>
            <person name="Yamashita A."/>
            <person name="Shiba T."/>
            <person name="Ogasawara N."/>
            <person name="Hattori M."/>
            <person name="Kuhara S."/>
            <person name="Hayashi H."/>
        </authorList>
    </citation>
    <scope>NUCLEOTIDE SEQUENCE [LARGE SCALE GENOMIC DNA]</scope>
    <source>
        <strain>13 / Type A</strain>
    </source>
</reference>
<dbReference type="EC" id="6.3.4.16" evidence="1"/>
<dbReference type="EC" id="6.3.5.5" evidence="1"/>
<dbReference type="EMBL" id="BA000016">
    <property type="protein sequence ID" value="BAB82278.1"/>
    <property type="molecule type" value="Genomic_DNA"/>
</dbReference>
<dbReference type="RefSeq" id="WP_011010971.1">
    <property type="nucleotide sequence ID" value="NC_003366.1"/>
</dbReference>
<dbReference type="SMR" id="Q8XHB3"/>
<dbReference type="STRING" id="195102.gene:10491906"/>
<dbReference type="KEGG" id="cpe:CPE2572"/>
<dbReference type="HOGENOM" id="CLU_000513_1_3_9"/>
<dbReference type="UniPathway" id="UPA00068">
    <property type="reaction ID" value="UER00171"/>
</dbReference>
<dbReference type="UniPathway" id="UPA00070">
    <property type="reaction ID" value="UER00115"/>
</dbReference>
<dbReference type="Proteomes" id="UP000000818">
    <property type="component" value="Chromosome"/>
</dbReference>
<dbReference type="GO" id="GO:0005737">
    <property type="term" value="C:cytoplasm"/>
    <property type="evidence" value="ECO:0007669"/>
    <property type="project" value="TreeGrafter"/>
</dbReference>
<dbReference type="GO" id="GO:0005524">
    <property type="term" value="F:ATP binding"/>
    <property type="evidence" value="ECO:0007669"/>
    <property type="project" value="UniProtKB-UniRule"/>
</dbReference>
<dbReference type="GO" id="GO:0004087">
    <property type="term" value="F:carbamoyl-phosphate synthase (ammonia) activity"/>
    <property type="evidence" value="ECO:0007669"/>
    <property type="project" value="RHEA"/>
</dbReference>
<dbReference type="GO" id="GO:0004088">
    <property type="term" value="F:carbamoyl-phosphate synthase (glutamine-hydrolyzing) activity"/>
    <property type="evidence" value="ECO:0007669"/>
    <property type="project" value="UniProtKB-UniRule"/>
</dbReference>
<dbReference type="GO" id="GO:0046872">
    <property type="term" value="F:metal ion binding"/>
    <property type="evidence" value="ECO:0007669"/>
    <property type="project" value="UniProtKB-KW"/>
</dbReference>
<dbReference type="GO" id="GO:0044205">
    <property type="term" value="P:'de novo' UMP biosynthetic process"/>
    <property type="evidence" value="ECO:0007669"/>
    <property type="project" value="UniProtKB-UniRule"/>
</dbReference>
<dbReference type="GO" id="GO:0006541">
    <property type="term" value="P:glutamine metabolic process"/>
    <property type="evidence" value="ECO:0007669"/>
    <property type="project" value="TreeGrafter"/>
</dbReference>
<dbReference type="GO" id="GO:0006526">
    <property type="term" value="P:L-arginine biosynthetic process"/>
    <property type="evidence" value="ECO:0007669"/>
    <property type="project" value="UniProtKB-UniRule"/>
</dbReference>
<dbReference type="CDD" id="cd01424">
    <property type="entry name" value="MGS_CPS_II"/>
    <property type="match status" value="1"/>
</dbReference>
<dbReference type="FunFam" id="1.10.1030.10:FF:000002">
    <property type="entry name" value="Carbamoyl-phosphate synthase large chain"/>
    <property type="match status" value="1"/>
</dbReference>
<dbReference type="FunFam" id="3.30.470.20:FF:000001">
    <property type="entry name" value="Carbamoyl-phosphate synthase large chain"/>
    <property type="match status" value="1"/>
</dbReference>
<dbReference type="FunFam" id="3.30.470.20:FF:000026">
    <property type="entry name" value="Carbamoyl-phosphate synthase large chain"/>
    <property type="match status" value="1"/>
</dbReference>
<dbReference type="FunFam" id="3.40.50.20:FF:000001">
    <property type="entry name" value="Carbamoyl-phosphate synthase large chain"/>
    <property type="match status" value="2"/>
</dbReference>
<dbReference type="Gene3D" id="3.40.50.20">
    <property type="match status" value="2"/>
</dbReference>
<dbReference type="Gene3D" id="3.30.1490.20">
    <property type="entry name" value="ATP-grasp fold, A domain"/>
    <property type="match status" value="1"/>
</dbReference>
<dbReference type="Gene3D" id="3.30.470.20">
    <property type="entry name" value="ATP-grasp fold, B domain"/>
    <property type="match status" value="2"/>
</dbReference>
<dbReference type="Gene3D" id="1.10.1030.10">
    <property type="entry name" value="Carbamoyl-phosphate synthetase, large subunit oligomerisation domain"/>
    <property type="match status" value="1"/>
</dbReference>
<dbReference type="Gene3D" id="3.40.50.1380">
    <property type="entry name" value="Methylglyoxal synthase-like domain"/>
    <property type="match status" value="1"/>
</dbReference>
<dbReference type="HAMAP" id="MF_01210_A">
    <property type="entry name" value="CPSase_L_chain_A"/>
    <property type="match status" value="1"/>
</dbReference>
<dbReference type="HAMAP" id="MF_01210_B">
    <property type="entry name" value="CPSase_L_chain_B"/>
    <property type="match status" value="1"/>
</dbReference>
<dbReference type="InterPro" id="IPR011761">
    <property type="entry name" value="ATP-grasp"/>
</dbReference>
<dbReference type="InterPro" id="IPR013815">
    <property type="entry name" value="ATP_grasp_subdomain_1"/>
</dbReference>
<dbReference type="InterPro" id="IPR006275">
    <property type="entry name" value="CarbamoylP_synth_lsu"/>
</dbReference>
<dbReference type="InterPro" id="IPR005480">
    <property type="entry name" value="CarbamoylP_synth_lsu_oligo"/>
</dbReference>
<dbReference type="InterPro" id="IPR036897">
    <property type="entry name" value="CarbamoylP_synth_lsu_oligo_sf"/>
</dbReference>
<dbReference type="InterPro" id="IPR005479">
    <property type="entry name" value="CbamoylP_synth_lsu-like_ATP-bd"/>
</dbReference>
<dbReference type="InterPro" id="IPR005483">
    <property type="entry name" value="CbamoylP_synth_lsu_CPSase_dom"/>
</dbReference>
<dbReference type="InterPro" id="IPR011607">
    <property type="entry name" value="MGS-like_dom"/>
</dbReference>
<dbReference type="InterPro" id="IPR036914">
    <property type="entry name" value="MGS-like_dom_sf"/>
</dbReference>
<dbReference type="InterPro" id="IPR033937">
    <property type="entry name" value="MGS_CPS_CarB"/>
</dbReference>
<dbReference type="InterPro" id="IPR016185">
    <property type="entry name" value="PreATP-grasp_dom_sf"/>
</dbReference>
<dbReference type="NCBIfam" id="TIGR01369">
    <property type="entry name" value="CPSaseII_lrg"/>
    <property type="match status" value="1"/>
</dbReference>
<dbReference type="NCBIfam" id="NF003671">
    <property type="entry name" value="PRK05294.1"/>
    <property type="match status" value="1"/>
</dbReference>
<dbReference type="NCBIfam" id="NF009455">
    <property type="entry name" value="PRK12815.1"/>
    <property type="match status" value="1"/>
</dbReference>
<dbReference type="PANTHER" id="PTHR11405:SF53">
    <property type="entry name" value="CARBAMOYL-PHOSPHATE SYNTHASE [AMMONIA], MITOCHONDRIAL"/>
    <property type="match status" value="1"/>
</dbReference>
<dbReference type="PANTHER" id="PTHR11405">
    <property type="entry name" value="CARBAMOYLTRANSFERASE FAMILY MEMBER"/>
    <property type="match status" value="1"/>
</dbReference>
<dbReference type="Pfam" id="PF02786">
    <property type="entry name" value="CPSase_L_D2"/>
    <property type="match status" value="2"/>
</dbReference>
<dbReference type="Pfam" id="PF02787">
    <property type="entry name" value="CPSase_L_D3"/>
    <property type="match status" value="1"/>
</dbReference>
<dbReference type="Pfam" id="PF02142">
    <property type="entry name" value="MGS"/>
    <property type="match status" value="1"/>
</dbReference>
<dbReference type="PRINTS" id="PR00098">
    <property type="entry name" value="CPSASE"/>
</dbReference>
<dbReference type="SMART" id="SM01096">
    <property type="entry name" value="CPSase_L_D3"/>
    <property type="match status" value="1"/>
</dbReference>
<dbReference type="SMART" id="SM00851">
    <property type="entry name" value="MGS"/>
    <property type="match status" value="1"/>
</dbReference>
<dbReference type="SUPFAM" id="SSF48108">
    <property type="entry name" value="Carbamoyl phosphate synthetase, large subunit connection domain"/>
    <property type="match status" value="1"/>
</dbReference>
<dbReference type="SUPFAM" id="SSF56059">
    <property type="entry name" value="Glutathione synthetase ATP-binding domain-like"/>
    <property type="match status" value="2"/>
</dbReference>
<dbReference type="SUPFAM" id="SSF52335">
    <property type="entry name" value="Methylglyoxal synthase-like"/>
    <property type="match status" value="1"/>
</dbReference>
<dbReference type="SUPFAM" id="SSF52440">
    <property type="entry name" value="PreATP-grasp domain"/>
    <property type="match status" value="2"/>
</dbReference>
<dbReference type="PROSITE" id="PS50975">
    <property type="entry name" value="ATP_GRASP"/>
    <property type="match status" value="2"/>
</dbReference>
<dbReference type="PROSITE" id="PS00866">
    <property type="entry name" value="CPSASE_1"/>
    <property type="match status" value="2"/>
</dbReference>
<dbReference type="PROSITE" id="PS00867">
    <property type="entry name" value="CPSASE_2"/>
    <property type="match status" value="2"/>
</dbReference>
<dbReference type="PROSITE" id="PS51855">
    <property type="entry name" value="MGS"/>
    <property type="match status" value="1"/>
</dbReference>
<proteinExistence type="inferred from homology"/>
<comment type="function">
    <text evidence="1">Large subunit of the glutamine-dependent carbamoyl phosphate synthetase (CPSase). CPSase catalyzes the formation of carbamoyl phosphate from the ammonia moiety of glutamine, carbonate, and phosphate donated by ATP, constituting the first step of 2 biosynthetic pathways, one leading to arginine and/or urea and the other to pyrimidine nucleotides. The large subunit (synthetase) binds the substrates ammonia (free or transferred from glutamine from the small subunit), hydrogencarbonate and ATP and carries out an ATP-coupled ligase reaction, activating hydrogencarbonate by forming carboxy phosphate which reacts with ammonia to form carbamoyl phosphate.</text>
</comment>
<comment type="catalytic activity">
    <reaction evidence="1">
        <text>hydrogencarbonate + L-glutamine + 2 ATP + H2O = carbamoyl phosphate + L-glutamate + 2 ADP + phosphate + 2 H(+)</text>
        <dbReference type="Rhea" id="RHEA:18633"/>
        <dbReference type="ChEBI" id="CHEBI:15377"/>
        <dbReference type="ChEBI" id="CHEBI:15378"/>
        <dbReference type="ChEBI" id="CHEBI:17544"/>
        <dbReference type="ChEBI" id="CHEBI:29985"/>
        <dbReference type="ChEBI" id="CHEBI:30616"/>
        <dbReference type="ChEBI" id="CHEBI:43474"/>
        <dbReference type="ChEBI" id="CHEBI:58228"/>
        <dbReference type="ChEBI" id="CHEBI:58359"/>
        <dbReference type="ChEBI" id="CHEBI:456216"/>
        <dbReference type="EC" id="6.3.5.5"/>
    </reaction>
</comment>
<comment type="catalytic activity">
    <molecule>Carbamoyl phosphate synthase large chain</molecule>
    <reaction evidence="1">
        <text>hydrogencarbonate + NH4(+) + 2 ATP = carbamoyl phosphate + 2 ADP + phosphate + 2 H(+)</text>
        <dbReference type="Rhea" id="RHEA:18029"/>
        <dbReference type="ChEBI" id="CHEBI:15378"/>
        <dbReference type="ChEBI" id="CHEBI:17544"/>
        <dbReference type="ChEBI" id="CHEBI:28938"/>
        <dbReference type="ChEBI" id="CHEBI:30616"/>
        <dbReference type="ChEBI" id="CHEBI:43474"/>
        <dbReference type="ChEBI" id="CHEBI:58228"/>
        <dbReference type="ChEBI" id="CHEBI:456216"/>
        <dbReference type="EC" id="6.3.4.16"/>
    </reaction>
</comment>
<comment type="cofactor">
    <cofactor evidence="1">
        <name>Mg(2+)</name>
        <dbReference type="ChEBI" id="CHEBI:18420"/>
    </cofactor>
    <cofactor evidence="1">
        <name>Mn(2+)</name>
        <dbReference type="ChEBI" id="CHEBI:29035"/>
    </cofactor>
    <text evidence="1">Binds 4 Mg(2+) or Mn(2+) ions per subunit.</text>
</comment>
<comment type="pathway">
    <text evidence="1">Amino-acid biosynthesis; L-arginine biosynthesis; carbamoyl phosphate from bicarbonate: step 1/1.</text>
</comment>
<comment type="pathway">
    <text evidence="1">Pyrimidine metabolism; UMP biosynthesis via de novo pathway; (S)-dihydroorotate from bicarbonate: step 1/3.</text>
</comment>
<comment type="subunit">
    <text evidence="1">Composed of two chains; the small (or glutamine) chain promotes the hydrolysis of glutamine to ammonia, which is used by the large (or ammonia) chain to synthesize carbamoyl phosphate. Tetramer of heterodimers (alpha,beta)4.</text>
</comment>
<comment type="domain">
    <text evidence="1">The large subunit is composed of 2 ATP-grasp domains that are involved in binding the 2 ATP molecules needed for carbamoyl phosphate synthesis. The N-terminal ATP-grasp domain (referred to as the carboxyphosphate synthetic component) catalyzes the ATP-dependent phosphorylation of hydrogencarbonate to carboxyphosphate and the subsequent nucleophilic attack by ammonia to form a carbamate intermediate. The C-terminal ATP-grasp domain (referred to as the carbamoyl phosphate synthetic component) then catalyzes the phosphorylation of carbamate with the second ATP to form the end product carbamoyl phosphate. The reactive and unstable enzyme intermediates are sequentially channeled from one active site to the next through the interior of the protein over a distance of at least 96 A.</text>
</comment>
<comment type="similarity">
    <text evidence="1">Belongs to the CarB family.</text>
</comment>